<keyword id="KW-0025">Alternative splicing</keyword>
<keyword id="KW-0217">Developmental protein</keyword>
<keyword id="KW-0238">DNA-binding</keyword>
<keyword id="KW-0539">Nucleus</keyword>
<keyword id="KW-1185">Reference proteome</keyword>
<keyword id="KW-0804">Transcription</keyword>
<keyword id="KW-0805">Transcription regulation</keyword>
<name>UNE12_ARATH</name>
<comment type="function">
    <text evidence="4">Required for ovule fertilization.</text>
</comment>
<comment type="subunit">
    <text evidence="5">Homodimer.</text>
</comment>
<comment type="interaction">
    <interactant intactId="EBI-3133156">
        <id>O22768</id>
    </interactant>
    <interactant intactId="EBI-25511057">
        <id>A0A384L363</id>
        <label>At3g18240</label>
    </interactant>
    <organismsDiffer>false</organismsDiffer>
    <experiments>3</experiments>
</comment>
<comment type="interaction">
    <interactant intactId="EBI-3133156">
        <id>O22768</id>
    </interactant>
    <interactant intactId="EBI-401198">
        <id>Q9SKK0</id>
        <label>EBF1</label>
    </interactant>
    <organismsDiffer>false</organismsDiffer>
    <experiments>3</experiments>
</comment>
<comment type="interaction">
    <interactant intactId="EBI-3133156">
        <id>O22768</id>
    </interactant>
    <interactant intactId="EBI-530486">
        <id>P46639</id>
        <label>KNAT1</label>
    </interactant>
    <organismsDiffer>false</organismsDiffer>
    <experiments>3</experiments>
</comment>
<comment type="subcellular location">
    <subcellularLocation>
        <location evidence="1">Nucleus</location>
    </subcellularLocation>
</comment>
<comment type="alternative products">
    <event type="alternative splicing"/>
    <isoform>
        <id>O22768-1</id>
        <name>1</name>
        <sequence type="displayed"/>
    </isoform>
    <isoform>
        <id>O22768-2</id>
        <name>2</name>
        <sequence type="described" ref="VSP_036114"/>
    </isoform>
</comment>
<comment type="tissue specificity">
    <text evidence="3">Expressed constitutively in roots, leaves, stems, and flowers.</text>
</comment>
<proteinExistence type="evidence at protein level"/>
<sequence>MASNNPHDNLSDQTPSDDFFEQILGLPNFSASSAAGLSGVDGGLGGGAPPMMLQLGSGEEGSHMGGLGGSGPTGFHNQMFPLGLSLDQGKGPGFLRPEGGHGSGKRFSDDVVDNRCSSMKPVFHGQPMQQPPPSAPHQPTSIRPRVRARRGQATDPHSIAERLRRERIAERIRALQELVPTVNKTDRAAMIDEIVDYVKFLRLQVKVLSMSRLGGAGAVAPLVTDMPLSSSVEDETGEGGRTPQPAWEKWSNDGTERQVAKLMEENVGAAMQLLQSKALCMMPISLAMAIYHSQPPDTSSVVKPENNPPQ</sequence>
<organism>
    <name type="scientific">Arabidopsis thaliana</name>
    <name type="common">Mouse-ear cress</name>
    <dbReference type="NCBI Taxonomy" id="3702"/>
    <lineage>
        <taxon>Eukaryota</taxon>
        <taxon>Viridiplantae</taxon>
        <taxon>Streptophyta</taxon>
        <taxon>Embryophyta</taxon>
        <taxon>Tracheophyta</taxon>
        <taxon>Spermatophyta</taxon>
        <taxon>Magnoliopsida</taxon>
        <taxon>eudicotyledons</taxon>
        <taxon>Gunneridae</taxon>
        <taxon>Pentapetalae</taxon>
        <taxon>rosids</taxon>
        <taxon>malvids</taxon>
        <taxon>Brassicales</taxon>
        <taxon>Brassicaceae</taxon>
        <taxon>Camelineae</taxon>
        <taxon>Arabidopsis</taxon>
    </lineage>
</organism>
<reference key="1">
    <citation type="journal article" date="2003" name="Mol. Biol. Evol.">
        <title>The basic helix-loop-helix transcription factor family in plants: a genome-wide study of protein structure and functional diversity.</title>
        <authorList>
            <person name="Heim M.A."/>
            <person name="Jakoby M."/>
            <person name="Werber M."/>
            <person name="Martin C."/>
            <person name="Weisshaar B."/>
            <person name="Bailey P.C."/>
        </authorList>
    </citation>
    <scope>NUCLEOTIDE SEQUENCE [MRNA] (ISOFORM 1)</scope>
    <scope>TISSUE SPECIFICITY</scope>
    <scope>GENE FAMILY</scope>
    <scope>NOMENCLATURE</scope>
    <source>
        <strain>cv. Columbia</strain>
    </source>
</reference>
<reference key="2">
    <citation type="journal article" date="1999" name="Nature">
        <title>Sequence and analysis of chromosome 4 of the plant Arabidopsis thaliana.</title>
        <authorList>
            <person name="Mayer K.F.X."/>
            <person name="Schueller C."/>
            <person name="Wambutt R."/>
            <person name="Murphy G."/>
            <person name="Volckaert G."/>
            <person name="Pohl T."/>
            <person name="Duesterhoeft A."/>
            <person name="Stiekema W."/>
            <person name="Entian K.-D."/>
            <person name="Terryn N."/>
            <person name="Harris B."/>
            <person name="Ansorge W."/>
            <person name="Brandt P."/>
            <person name="Grivell L.A."/>
            <person name="Rieger M."/>
            <person name="Weichselgartner M."/>
            <person name="de Simone V."/>
            <person name="Obermaier B."/>
            <person name="Mache R."/>
            <person name="Mueller M."/>
            <person name="Kreis M."/>
            <person name="Delseny M."/>
            <person name="Puigdomenech P."/>
            <person name="Watson M."/>
            <person name="Schmidtheini T."/>
            <person name="Reichert B."/>
            <person name="Portetelle D."/>
            <person name="Perez-Alonso M."/>
            <person name="Boutry M."/>
            <person name="Bancroft I."/>
            <person name="Vos P."/>
            <person name="Hoheisel J."/>
            <person name="Zimmermann W."/>
            <person name="Wedler H."/>
            <person name="Ridley P."/>
            <person name="Langham S.-A."/>
            <person name="McCullagh B."/>
            <person name="Bilham L."/>
            <person name="Robben J."/>
            <person name="van der Schueren J."/>
            <person name="Grymonprez B."/>
            <person name="Chuang Y.-J."/>
            <person name="Vandenbussche F."/>
            <person name="Braeken M."/>
            <person name="Weltjens I."/>
            <person name="Voet M."/>
            <person name="Bastiaens I."/>
            <person name="Aert R."/>
            <person name="Defoor E."/>
            <person name="Weitzenegger T."/>
            <person name="Bothe G."/>
            <person name="Ramsperger U."/>
            <person name="Hilbert H."/>
            <person name="Braun M."/>
            <person name="Holzer E."/>
            <person name="Brandt A."/>
            <person name="Peters S."/>
            <person name="van Staveren M."/>
            <person name="Dirkse W."/>
            <person name="Mooijman P."/>
            <person name="Klein Lankhorst R."/>
            <person name="Rose M."/>
            <person name="Hauf J."/>
            <person name="Koetter P."/>
            <person name="Berneiser S."/>
            <person name="Hempel S."/>
            <person name="Feldpausch M."/>
            <person name="Lamberth S."/>
            <person name="Van den Daele H."/>
            <person name="De Keyser A."/>
            <person name="Buysshaert C."/>
            <person name="Gielen J."/>
            <person name="Villarroel R."/>
            <person name="De Clercq R."/>
            <person name="van Montagu M."/>
            <person name="Rogers J."/>
            <person name="Cronin A."/>
            <person name="Quail M.A."/>
            <person name="Bray-Allen S."/>
            <person name="Clark L."/>
            <person name="Doggett J."/>
            <person name="Hall S."/>
            <person name="Kay M."/>
            <person name="Lennard N."/>
            <person name="McLay K."/>
            <person name="Mayes R."/>
            <person name="Pettett A."/>
            <person name="Rajandream M.A."/>
            <person name="Lyne M."/>
            <person name="Benes V."/>
            <person name="Rechmann S."/>
            <person name="Borkova D."/>
            <person name="Bloecker H."/>
            <person name="Scharfe M."/>
            <person name="Grimm M."/>
            <person name="Loehnert T.-H."/>
            <person name="Dose S."/>
            <person name="de Haan M."/>
            <person name="Maarse A.C."/>
            <person name="Schaefer M."/>
            <person name="Mueller-Auer S."/>
            <person name="Gabel C."/>
            <person name="Fuchs M."/>
            <person name="Fartmann B."/>
            <person name="Granderath K."/>
            <person name="Dauner D."/>
            <person name="Herzl A."/>
            <person name="Neumann S."/>
            <person name="Argiriou A."/>
            <person name="Vitale D."/>
            <person name="Liguori R."/>
            <person name="Piravandi E."/>
            <person name="Massenet O."/>
            <person name="Quigley F."/>
            <person name="Clabauld G."/>
            <person name="Muendlein A."/>
            <person name="Felber R."/>
            <person name="Schnabl S."/>
            <person name="Hiller R."/>
            <person name="Schmidt W."/>
            <person name="Lecharny A."/>
            <person name="Aubourg S."/>
            <person name="Chefdor F."/>
            <person name="Cooke R."/>
            <person name="Berger C."/>
            <person name="Monfort A."/>
            <person name="Casacuberta E."/>
            <person name="Gibbons T."/>
            <person name="Weber N."/>
            <person name="Vandenbol M."/>
            <person name="Bargues M."/>
            <person name="Terol J."/>
            <person name="Torres A."/>
            <person name="Perez-Perez A."/>
            <person name="Purnelle B."/>
            <person name="Bent E."/>
            <person name="Johnson S."/>
            <person name="Tacon D."/>
            <person name="Jesse T."/>
            <person name="Heijnen L."/>
            <person name="Schwarz S."/>
            <person name="Scholler P."/>
            <person name="Heber S."/>
            <person name="Francs P."/>
            <person name="Bielke C."/>
            <person name="Frishman D."/>
            <person name="Haase D."/>
            <person name="Lemcke K."/>
            <person name="Mewes H.-W."/>
            <person name="Stocker S."/>
            <person name="Zaccaria P."/>
            <person name="Bevan M."/>
            <person name="Wilson R.K."/>
            <person name="de la Bastide M."/>
            <person name="Habermann K."/>
            <person name="Parnell L."/>
            <person name="Dedhia N."/>
            <person name="Gnoj L."/>
            <person name="Schutz K."/>
            <person name="Huang E."/>
            <person name="Spiegel L."/>
            <person name="Sekhon M."/>
            <person name="Murray J."/>
            <person name="Sheet P."/>
            <person name="Cordes M."/>
            <person name="Abu-Threideh J."/>
            <person name="Stoneking T."/>
            <person name="Kalicki J."/>
            <person name="Graves T."/>
            <person name="Harmon G."/>
            <person name="Edwards J."/>
            <person name="Latreille P."/>
            <person name="Courtney L."/>
            <person name="Cloud J."/>
            <person name="Abbott A."/>
            <person name="Scott K."/>
            <person name="Johnson D."/>
            <person name="Minx P."/>
            <person name="Bentley D."/>
            <person name="Fulton B."/>
            <person name="Miller N."/>
            <person name="Greco T."/>
            <person name="Kemp K."/>
            <person name="Kramer J."/>
            <person name="Fulton L."/>
            <person name="Mardis E."/>
            <person name="Dante M."/>
            <person name="Pepin K."/>
            <person name="Hillier L.W."/>
            <person name="Nelson J."/>
            <person name="Spieth J."/>
            <person name="Ryan E."/>
            <person name="Andrews S."/>
            <person name="Geisel C."/>
            <person name="Layman D."/>
            <person name="Du H."/>
            <person name="Ali J."/>
            <person name="Berghoff A."/>
            <person name="Jones K."/>
            <person name="Drone K."/>
            <person name="Cotton M."/>
            <person name="Joshu C."/>
            <person name="Antonoiu B."/>
            <person name="Zidanic M."/>
            <person name="Strong C."/>
            <person name="Sun H."/>
            <person name="Lamar B."/>
            <person name="Yordan C."/>
            <person name="Ma P."/>
            <person name="Zhong J."/>
            <person name="Preston R."/>
            <person name="Vil D."/>
            <person name="Shekher M."/>
            <person name="Matero A."/>
            <person name="Shah R."/>
            <person name="Swaby I.K."/>
            <person name="O'Shaughnessy A."/>
            <person name="Rodriguez M."/>
            <person name="Hoffman J."/>
            <person name="Till S."/>
            <person name="Granat S."/>
            <person name="Shohdy N."/>
            <person name="Hasegawa A."/>
            <person name="Hameed A."/>
            <person name="Lodhi M."/>
            <person name="Johnson A."/>
            <person name="Chen E."/>
            <person name="Marra M.A."/>
            <person name="Martienssen R."/>
            <person name="McCombie W.R."/>
        </authorList>
    </citation>
    <scope>NUCLEOTIDE SEQUENCE [LARGE SCALE GENOMIC DNA]</scope>
    <source>
        <strain>cv. Columbia</strain>
    </source>
</reference>
<reference key="3">
    <citation type="journal article" date="2017" name="Plant J.">
        <title>Araport11: a complete reannotation of the Arabidopsis thaliana reference genome.</title>
        <authorList>
            <person name="Cheng C.Y."/>
            <person name="Krishnakumar V."/>
            <person name="Chan A.P."/>
            <person name="Thibaud-Nissen F."/>
            <person name="Schobel S."/>
            <person name="Town C.D."/>
        </authorList>
    </citation>
    <scope>GENOME REANNOTATION</scope>
    <source>
        <strain>cv. Columbia</strain>
    </source>
</reference>
<reference key="4">
    <citation type="journal article" date="2003" name="Science">
        <title>Empirical analysis of transcriptional activity in the Arabidopsis genome.</title>
        <authorList>
            <person name="Yamada K."/>
            <person name="Lim J."/>
            <person name="Dale J.M."/>
            <person name="Chen H."/>
            <person name="Shinn P."/>
            <person name="Palm C.J."/>
            <person name="Southwick A.M."/>
            <person name="Wu H.C."/>
            <person name="Kim C.J."/>
            <person name="Nguyen M."/>
            <person name="Pham P.K."/>
            <person name="Cheuk R.F."/>
            <person name="Karlin-Newmann G."/>
            <person name="Liu S.X."/>
            <person name="Lam B."/>
            <person name="Sakano H."/>
            <person name="Wu T."/>
            <person name="Yu G."/>
            <person name="Miranda M."/>
            <person name="Quach H.L."/>
            <person name="Tripp M."/>
            <person name="Chang C.H."/>
            <person name="Lee J.M."/>
            <person name="Toriumi M.J."/>
            <person name="Chan M.M."/>
            <person name="Tang C.C."/>
            <person name="Onodera C.S."/>
            <person name="Deng J.M."/>
            <person name="Akiyama K."/>
            <person name="Ansari Y."/>
            <person name="Arakawa T."/>
            <person name="Banh J."/>
            <person name="Banno F."/>
            <person name="Bowser L."/>
            <person name="Brooks S.Y."/>
            <person name="Carninci P."/>
            <person name="Chao Q."/>
            <person name="Choy N."/>
            <person name="Enju A."/>
            <person name="Goldsmith A.D."/>
            <person name="Gurjal M."/>
            <person name="Hansen N.F."/>
            <person name="Hayashizaki Y."/>
            <person name="Johnson-Hopson C."/>
            <person name="Hsuan V.W."/>
            <person name="Iida K."/>
            <person name="Karnes M."/>
            <person name="Khan S."/>
            <person name="Koesema E."/>
            <person name="Ishida J."/>
            <person name="Jiang P.X."/>
            <person name="Jones T."/>
            <person name="Kawai J."/>
            <person name="Kamiya A."/>
            <person name="Meyers C."/>
            <person name="Nakajima M."/>
            <person name="Narusaka M."/>
            <person name="Seki M."/>
            <person name="Sakurai T."/>
            <person name="Satou M."/>
            <person name="Tamse R."/>
            <person name="Vaysberg M."/>
            <person name="Wallender E.K."/>
            <person name="Wong C."/>
            <person name="Yamamura Y."/>
            <person name="Yuan S."/>
            <person name="Shinozaki K."/>
            <person name="Davis R.W."/>
            <person name="Theologis A."/>
            <person name="Ecker J.R."/>
        </authorList>
    </citation>
    <scope>NUCLEOTIDE SEQUENCE [LARGE SCALE MRNA] (ISOFORM 1)</scope>
    <source>
        <strain>cv. Columbia</strain>
    </source>
</reference>
<reference key="5">
    <citation type="submission" date="2002-03" db="EMBL/GenBank/DDBJ databases">
        <title>Full-length cDNA from Arabidopsis thaliana.</title>
        <authorList>
            <person name="Brover V.V."/>
            <person name="Troukhan M.E."/>
            <person name="Alexandrov N.A."/>
            <person name="Lu Y.-P."/>
            <person name="Flavell R.B."/>
            <person name="Feldmann K.A."/>
        </authorList>
    </citation>
    <scope>NUCLEOTIDE SEQUENCE [LARGE SCALE MRNA] (ISOFORM 1)</scope>
</reference>
<reference key="6">
    <citation type="journal article" date="2003" name="Plant Cell">
        <title>The Arabidopsis basic/helix-loop-helix transcription factor family.</title>
        <authorList>
            <person name="Toledo-Ortiz G."/>
            <person name="Huq E."/>
            <person name="Quail P.H."/>
        </authorList>
    </citation>
    <scope>GENE FAMILY</scope>
</reference>
<reference key="7">
    <citation type="journal article" date="2003" name="Plant Cell">
        <title>Update on the basic helix-loop-helix transcription factor gene family in Arabidopsis thaliana.</title>
        <authorList>
            <person name="Bailey P.C."/>
            <person name="Martin C."/>
            <person name="Toledo-Ortiz G."/>
            <person name="Quail P.H."/>
            <person name="Huq E."/>
            <person name="Heim M.A."/>
            <person name="Jakoby M."/>
            <person name="Werber M."/>
            <person name="Weisshaar B."/>
        </authorList>
    </citation>
    <scope>GENE FAMILY</scope>
    <scope>NOMENCLATURE</scope>
</reference>
<reference key="8">
    <citation type="journal article" date="2005" name="Development">
        <title>Genetic and molecular identification of genes required for female gametophyte development and function in Arabidopsis.</title>
        <authorList>
            <person name="Pagnussat G.C."/>
            <person name="Yu H.-J."/>
            <person name="Ngo Q.A."/>
            <person name="Rajani S."/>
            <person name="Mayalagu S."/>
            <person name="Johnson C.S."/>
            <person name="Capron A."/>
            <person name="Xie L.-F."/>
            <person name="Ye D."/>
            <person name="Sundaresan V."/>
        </authorList>
    </citation>
    <scope>FUNCTION</scope>
</reference>
<evidence type="ECO:0000255" key="1">
    <source>
        <dbReference type="PROSITE-ProRule" id="PRU00981"/>
    </source>
</evidence>
<evidence type="ECO:0000256" key="2">
    <source>
        <dbReference type="SAM" id="MobiDB-lite"/>
    </source>
</evidence>
<evidence type="ECO:0000269" key="3">
    <source>
    </source>
</evidence>
<evidence type="ECO:0000269" key="4">
    <source>
    </source>
</evidence>
<evidence type="ECO:0000305" key="5"/>
<accession>O22768</accession>
<accession>B3H4J4</accession>
<accession>Q8L9U3</accession>
<accession>Q8S3E3</accession>
<gene>
    <name type="primary">UNE12</name>
    <name type="synonym">BHLH59</name>
    <name type="synonym">EN93</name>
    <name type="ordered locus">At4g02590</name>
    <name type="ORF">T10P11.13</name>
</gene>
<protein>
    <recommendedName>
        <fullName>Transcription factor UNE12</fullName>
    </recommendedName>
    <alternativeName>
        <fullName>Basic helix-loop-helix protein 59</fullName>
        <shortName>AtbHLH59</shortName>
        <shortName>bHLH 59</shortName>
    </alternativeName>
    <alternativeName>
        <fullName>Protein UNFERTILIZED EMBRYO SAC 12</fullName>
    </alternativeName>
    <alternativeName>
        <fullName>Transcription factor EN 93</fullName>
    </alternativeName>
    <alternativeName>
        <fullName>bHLH transcription factor bHLH059</fullName>
    </alternativeName>
</protein>
<dbReference type="EMBL" id="AF488592">
    <property type="protein sequence ID" value="AAM10948.1"/>
    <property type="molecule type" value="mRNA"/>
</dbReference>
<dbReference type="EMBL" id="AC002330">
    <property type="protein sequence ID" value="AAC78259.1"/>
    <property type="molecule type" value="Genomic_DNA"/>
</dbReference>
<dbReference type="EMBL" id="AL161494">
    <property type="protein sequence ID" value="CAB80752.1"/>
    <property type="molecule type" value="Genomic_DNA"/>
</dbReference>
<dbReference type="EMBL" id="CP002687">
    <property type="protein sequence ID" value="AEE82199.1"/>
    <property type="molecule type" value="Genomic_DNA"/>
</dbReference>
<dbReference type="EMBL" id="CP002687">
    <property type="protein sequence ID" value="AEE82200.1"/>
    <property type="molecule type" value="Genomic_DNA"/>
</dbReference>
<dbReference type="EMBL" id="CP002687">
    <property type="protein sequence ID" value="AEE82201.1"/>
    <property type="molecule type" value="Genomic_DNA"/>
</dbReference>
<dbReference type="EMBL" id="AF367328">
    <property type="protein sequence ID" value="AAK32915.1"/>
    <property type="molecule type" value="mRNA"/>
</dbReference>
<dbReference type="EMBL" id="AY143951">
    <property type="protein sequence ID" value="AAN28890.1"/>
    <property type="molecule type" value="mRNA"/>
</dbReference>
<dbReference type="EMBL" id="AY088218">
    <property type="protein sequence ID" value="AAM65759.1"/>
    <property type="molecule type" value="mRNA"/>
</dbReference>
<dbReference type="PIR" id="T01090">
    <property type="entry name" value="T01090"/>
</dbReference>
<dbReference type="RefSeq" id="NP_001031577.1">
    <molecule id="O22768-1"/>
    <property type="nucleotide sequence ID" value="NM_001036500.2"/>
</dbReference>
<dbReference type="RefSeq" id="NP_001118919.1">
    <molecule id="O22768-2"/>
    <property type="nucleotide sequence ID" value="NM_001125447.1"/>
</dbReference>
<dbReference type="RefSeq" id="NP_567245.1">
    <molecule id="O22768-1"/>
    <property type="nucleotide sequence ID" value="NM_116493.3"/>
</dbReference>
<dbReference type="SMR" id="O22768"/>
<dbReference type="BioGRID" id="13415">
    <property type="interactions" value="32"/>
</dbReference>
<dbReference type="FunCoup" id="O22768">
    <property type="interactions" value="2270"/>
</dbReference>
<dbReference type="IntAct" id="O22768">
    <property type="interactions" value="37"/>
</dbReference>
<dbReference type="STRING" id="3702.O22768"/>
<dbReference type="iPTMnet" id="O22768"/>
<dbReference type="PaxDb" id="3702-AT4G02590.1"/>
<dbReference type="ProteomicsDB" id="245318">
    <molecule id="O22768-1"/>
</dbReference>
<dbReference type="EnsemblPlants" id="AT4G02590.1">
    <molecule id="O22768-1"/>
    <property type="protein sequence ID" value="AT4G02590.1"/>
    <property type="gene ID" value="AT4G02590"/>
</dbReference>
<dbReference type="EnsemblPlants" id="AT4G02590.2">
    <molecule id="O22768-1"/>
    <property type="protein sequence ID" value="AT4G02590.2"/>
    <property type="gene ID" value="AT4G02590"/>
</dbReference>
<dbReference type="EnsemblPlants" id="AT4G02590.3">
    <molecule id="O22768-2"/>
    <property type="protein sequence ID" value="AT4G02590.3"/>
    <property type="gene ID" value="AT4G02590"/>
</dbReference>
<dbReference type="GeneID" id="828126"/>
<dbReference type="Gramene" id="AT4G02590.1">
    <molecule id="O22768-1"/>
    <property type="protein sequence ID" value="AT4G02590.1"/>
    <property type="gene ID" value="AT4G02590"/>
</dbReference>
<dbReference type="Gramene" id="AT4G02590.2">
    <molecule id="O22768-1"/>
    <property type="protein sequence ID" value="AT4G02590.2"/>
    <property type="gene ID" value="AT4G02590"/>
</dbReference>
<dbReference type="Gramene" id="AT4G02590.3">
    <molecule id="O22768-2"/>
    <property type="protein sequence ID" value="AT4G02590.3"/>
    <property type="gene ID" value="AT4G02590"/>
</dbReference>
<dbReference type="KEGG" id="ath:AT4G02590"/>
<dbReference type="Araport" id="AT4G02590"/>
<dbReference type="TAIR" id="AT4G02590">
    <property type="gene designation" value="UNE12"/>
</dbReference>
<dbReference type="eggNOG" id="ENOG502QPM5">
    <property type="taxonomic scope" value="Eukaryota"/>
</dbReference>
<dbReference type="InParanoid" id="O22768"/>
<dbReference type="PhylomeDB" id="O22768"/>
<dbReference type="PRO" id="PR:O22768"/>
<dbReference type="Proteomes" id="UP000006548">
    <property type="component" value="Chromosome 4"/>
</dbReference>
<dbReference type="ExpressionAtlas" id="O22768">
    <property type="expression patterns" value="baseline and differential"/>
</dbReference>
<dbReference type="GO" id="GO:0005634">
    <property type="term" value="C:nucleus"/>
    <property type="evidence" value="ECO:0000314"/>
    <property type="project" value="TAIR"/>
</dbReference>
<dbReference type="GO" id="GO:0003677">
    <property type="term" value="F:DNA binding"/>
    <property type="evidence" value="ECO:0007669"/>
    <property type="project" value="UniProtKB-KW"/>
</dbReference>
<dbReference type="GO" id="GO:0003700">
    <property type="term" value="F:DNA-binding transcription factor activity"/>
    <property type="evidence" value="ECO:0000250"/>
    <property type="project" value="TAIR"/>
</dbReference>
<dbReference type="GO" id="GO:0046983">
    <property type="term" value="F:protein dimerization activity"/>
    <property type="evidence" value="ECO:0007669"/>
    <property type="project" value="InterPro"/>
</dbReference>
<dbReference type="GO" id="GO:0009567">
    <property type="term" value="P:double fertilization forming a zygote and endosperm"/>
    <property type="evidence" value="ECO:0000315"/>
    <property type="project" value="TAIR"/>
</dbReference>
<dbReference type="GO" id="GO:0031347">
    <property type="term" value="P:regulation of defense response"/>
    <property type="evidence" value="ECO:0000315"/>
    <property type="project" value="TAIR"/>
</dbReference>
<dbReference type="GO" id="GO:0006355">
    <property type="term" value="P:regulation of DNA-templated transcription"/>
    <property type="evidence" value="ECO:0000304"/>
    <property type="project" value="TAIR"/>
</dbReference>
<dbReference type="GO" id="GO:0010468">
    <property type="term" value="P:regulation of gene expression"/>
    <property type="evidence" value="ECO:0000353"/>
    <property type="project" value="TAIR"/>
</dbReference>
<dbReference type="GO" id="GO:2000031">
    <property type="term" value="P:regulation of salicylic acid mediated signaling pathway"/>
    <property type="evidence" value="ECO:0000315"/>
    <property type="project" value="TAIR"/>
</dbReference>
<dbReference type="GO" id="GO:0009737">
    <property type="term" value="P:response to abscisic acid"/>
    <property type="evidence" value="ECO:0000270"/>
    <property type="project" value="TAIR"/>
</dbReference>
<dbReference type="GO" id="GO:0006970">
    <property type="term" value="P:response to osmotic stress"/>
    <property type="evidence" value="ECO:0000270"/>
    <property type="project" value="TAIR"/>
</dbReference>
<dbReference type="GO" id="GO:1902074">
    <property type="term" value="P:response to salt"/>
    <property type="evidence" value="ECO:0000270"/>
    <property type="project" value="TAIR"/>
</dbReference>
<dbReference type="FunFam" id="4.10.280.10:FF:000044">
    <property type="entry name" value="Basic helix-loop-helix transcription factor"/>
    <property type="match status" value="1"/>
</dbReference>
<dbReference type="Gene3D" id="4.10.280.10">
    <property type="entry name" value="Helix-loop-helix DNA-binding domain"/>
    <property type="match status" value="1"/>
</dbReference>
<dbReference type="InterPro" id="IPR011598">
    <property type="entry name" value="bHLH_dom"/>
</dbReference>
<dbReference type="InterPro" id="IPR036638">
    <property type="entry name" value="HLH_DNA-bd_sf"/>
</dbReference>
<dbReference type="InterPro" id="IPR045843">
    <property type="entry name" value="IND-like"/>
</dbReference>
<dbReference type="PANTHER" id="PTHR16223">
    <property type="entry name" value="TRANSCRIPTION FACTOR BHLH83-RELATED"/>
    <property type="match status" value="1"/>
</dbReference>
<dbReference type="PANTHER" id="PTHR16223:SF200">
    <property type="entry name" value="TRANSCRIPTION FACTOR UNE12-RELATED"/>
    <property type="match status" value="1"/>
</dbReference>
<dbReference type="Pfam" id="PF00010">
    <property type="entry name" value="HLH"/>
    <property type="match status" value="1"/>
</dbReference>
<dbReference type="SMART" id="SM00353">
    <property type="entry name" value="HLH"/>
    <property type="match status" value="1"/>
</dbReference>
<dbReference type="SUPFAM" id="SSF47459">
    <property type="entry name" value="HLH, helix-loop-helix DNA-binding domain"/>
    <property type="match status" value="1"/>
</dbReference>
<dbReference type="PROSITE" id="PS50888">
    <property type="entry name" value="BHLH"/>
    <property type="match status" value="1"/>
</dbReference>
<feature type="chain" id="PRO_0000358857" description="Transcription factor UNE12">
    <location>
        <begin position="1"/>
        <end position="310"/>
    </location>
</feature>
<feature type="domain" description="bHLH" evidence="1">
    <location>
        <begin position="152"/>
        <end position="201"/>
    </location>
</feature>
<feature type="region of interest" description="Disordered" evidence="2">
    <location>
        <begin position="124"/>
        <end position="156"/>
    </location>
</feature>
<feature type="region of interest" description="Disordered" evidence="2">
    <location>
        <begin position="229"/>
        <end position="253"/>
    </location>
</feature>
<feature type="splice variant" id="VSP_036114" description="In isoform 2." evidence="5">
    <location>
        <begin position="1"/>
        <end position="63"/>
    </location>
</feature>
<feature type="sequence conflict" description="In Ref. 5; AAM65759." evidence="5" ref="5">
    <original>A</original>
    <variation>V</variation>
    <location>
        <position position="216"/>
    </location>
</feature>